<name>RL21_PYRAE</name>
<comment type="similarity">
    <text evidence="1">Belongs to the eukaryotic ribosomal protein eL21 family.</text>
</comment>
<feature type="chain" id="PRO_0000149697" description="Large ribosomal subunit protein eL21">
    <location>
        <begin position="1"/>
        <end position="100"/>
    </location>
</feature>
<reference key="1">
    <citation type="journal article" date="2002" name="Proc. Natl. Acad. Sci. U.S.A.">
        <title>Genome sequence of the hyperthermophilic crenarchaeon Pyrobaculum aerophilum.</title>
        <authorList>
            <person name="Fitz-Gibbon S.T."/>
            <person name="Ladner H."/>
            <person name="Kim U.-J."/>
            <person name="Stetter K.O."/>
            <person name="Simon M.I."/>
            <person name="Miller J.H."/>
        </authorList>
    </citation>
    <scope>NUCLEOTIDE SEQUENCE [LARGE SCALE GENOMIC DNA]</scope>
    <source>
        <strain>ATCC 51768 / DSM 7523 / JCM 9630 / CIP 104966 / NBRC 100827 / IM2</strain>
    </source>
</reference>
<accession>Q8ZTB5</accession>
<organism>
    <name type="scientific">Pyrobaculum aerophilum (strain ATCC 51768 / DSM 7523 / JCM 9630 / CIP 104966 / NBRC 100827 / IM2)</name>
    <dbReference type="NCBI Taxonomy" id="178306"/>
    <lineage>
        <taxon>Archaea</taxon>
        <taxon>Thermoproteota</taxon>
        <taxon>Thermoprotei</taxon>
        <taxon>Thermoproteales</taxon>
        <taxon>Thermoproteaceae</taxon>
        <taxon>Pyrobaculum</taxon>
    </lineage>
</organism>
<proteinExistence type="inferred from homology"/>
<protein>
    <recommendedName>
        <fullName evidence="1">Large ribosomal subunit protein eL21</fullName>
    </recommendedName>
    <alternativeName>
        <fullName evidence="2">50S ribosomal protein L21e</fullName>
    </alternativeName>
</protein>
<gene>
    <name evidence="1" type="primary">rpl21e</name>
    <name type="ordered locus">PAE3334</name>
</gene>
<sequence>MVKRTHGYRYKTRKLLRKKPREKGLSGLSRLLYEYKVGDKVIIDIDSTFISTAPHRRYQGKVGTVVGIRGRAYVIETFLGDKKKIIITTPEHLKPYQGGS</sequence>
<keyword id="KW-1185">Reference proteome</keyword>
<keyword id="KW-0687">Ribonucleoprotein</keyword>
<keyword id="KW-0689">Ribosomal protein</keyword>
<evidence type="ECO:0000255" key="1">
    <source>
        <dbReference type="HAMAP-Rule" id="MF_00369"/>
    </source>
</evidence>
<evidence type="ECO:0000305" key="2"/>
<dbReference type="EMBL" id="AE009441">
    <property type="protein sequence ID" value="AAL64847.1"/>
    <property type="molecule type" value="Genomic_DNA"/>
</dbReference>
<dbReference type="RefSeq" id="WP_011009314.1">
    <property type="nucleotide sequence ID" value="NC_003364.1"/>
</dbReference>
<dbReference type="SMR" id="Q8ZTB5"/>
<dbReference type="FunCoup" id="Q8ZTB5">
    <property type="interactions" value="185"/>
</dbReference>
<dbReference type="STRING" id="178306.PAE3334"/>
<dbReference type="EnsemblBacteria" id="AAL64847">
    <property type="protein sequence ID" value="AAL64847"/>
    <property type="gene ID" value="PAE3334"/>
</dbReference>
<dbReference type="GeneID" id="1464037"/>
<dbReference type="KEGG" id="pai:PAE3334"/>
<dbReference type="PATRIC" id="fig|178306.9.peg.2511"/>
<dbReference type="eggNOG" id="arCOG04129">
    <property type="taxonomic scope" value="Archaea"/>
</dbReference>
<dbReference type="HOGENOM" id="CLU_103610_1_1_2"/>
<dbReference type="InParanoid" id="Q8ZTB5"/>
<dbReference type="Proteomes" id="UP000002439">
    <property type="component" value="Chromosome"/>
</dbReference>
<dbReference type="GO" id="GO:0022625">
    <property type="term" value="C:cytosolic large ribosomal subunit"/>
    <property type="evidence" value="ECO:0000318"/>
    <property type="project" value="GO_Central"/>
</dbReference>
<dbReference type="GO" id="GO:0003735">
    <property type="term" value="F:structural constituent of ribosome"/>
    <property type="evidence" value="ECO:0000318"/>
    <property type="project" value="GO_Central"/>
</dbReference>
<dbReference type="GO" id="GO:0006412">
    <property type="term" value="P:translation"/>
    <property type="evidence" value="ECO:0007669"/>
    <property type="project" value="UniProtKB-UniRule"/>
</dbReference>
<dbReference type="FunFam" id="2.30.30.70:FF:000001">
    <property type="entry name" value="60S ribosomal protein L21"/>
    <property type="match status" value="1"/>
</dbReference>
<dbReference type="Gene3D" id="2.30.30.70">
    <property type="entry name" value="Ribosomal protein L21"/>
    <property type="match status" value="1"/>
</dbReference>
<dbReference type="HAMAP" id="MF_00369">
    <property type="entry name" value="Ribosomal_eL21"/>
    <property type="match status" value="1"/>
</dbReference>
<dbReference type="InterPro" id="IPR001147">
    <property type="entry name" value="Ribosomal_eL21"/>
</dbReference>
<dbReference type="InterPro" id="IPR022856">
    <property type="entry name" value="Ribosomal_eL21_arc"/>
</dbReference>
<dbReference type="InterPro" id="IPR018259">
    <property type="entry name" value="Ribosomal_eL21_CS"/>
</dbReference>
<dbReference type="InterPro" id="IPR036948">
    <property type="entry name" value="Ribosomal_eL21_sf"/>
</dbReference>
<dbReference type="InterPro" id="IPR008991">
    <property type="entry name" value="Translation_prot_SH3-like_sf"/>
</dbReference>
<dbReference type="NCBIfam" id="NF003303">
    <property type="entry name" value="PRK04306.1"/>
    <property type="match status" value="1"/>
</dbReference>
<dbReference type="PANTHER" id="PTHR20981">
    <property type="entry name" value="60S RIBOSOMAL PROTEIN L21"/>
    <property type="match status" value="1"/>
</dbReference>
<dbReference type="Pfam" id="PF01157">
    <property type="entry name" value="Ribosomal_L21e"/>
    <property type="match status" value="1"/>
</dbReference>
<dbReference type="SUPFAM" id="SSF50104">
    <property type="entry name" value="Translation proteins SH3-like domain"/>
    <property type="match status" value="1"/>
</dbReference>
<dbReference type="PROSITE" id="PS01171">
    <property type="entry name" value="RIBOSOMAL_L21E"/>
    <property type="match status" value="1"/>
</dbReference>